<comment type="function">
    <text evidence="1">Protamines substitute for histones in the chromatin of sperm during the haploid phase of spermatogenesis. They compact sperm DNA into a highly condensed, stable and inactive complex (By similarity).</text>
</comment>
<comment type="subcellular location">
    <subcellularLocation>
        <location evidence="1">Nucleus</location>
    </subcellularLocation>
    <subcellularLocation>
        <location evidence="1">Chromosome</location>
    </subcellularLocation>
</comment>
<comment type="tissue specificity">
    <text>Testis.</text>
</comment>
<comment type="similarity">
    <text evidence="2">Belongs to the protamine P1 family.</text>
</comment>
<feature type="chain" id="PRO_0000191491" description="Sperm protamine P1">
    <location>
        <begin position="1"/>
        <end position="51"/>
    </location>
</feature>
<sequence>MARYRCCRSQSRSRCCRRRRRCRRRRRRRCRARRRAMRCCRRRYRLRCRRY</sequence>
<proteinExistence type="evidence at transcript level"/>
<organism>
    <name type="scientific">Macaca mulatta</name>
    <name type="common">Rhesus macaque</name>
    <dbReference type="NCBI Taxonomy" id="9544"/>
    <lineage>
        <taxon>Eukaryota</taxon>
        <taxon>Metazoa</taxon>
        <taxon>Chordata</taxon>
        <taxon>Craniata</taxon>
        <taxon>Vertebrata</taxon>
        <taxon>Euteleostomi</taxon>
        <taxon>Mammalia</taxon>
        <taxon>Eutheria</taxon>
        <taxon>Euarchontoglires</taxon>
        <taxon>Primates</taxon>
        <taxon>Haplorrhini</taxon>
        <taxon>Catarrhini</taxon>
        <taxon>Cercopithecidae</taxon>
        <taxon>Cercopithecinae</taxon>
        <taxon>Macaca</taxon>
    </lineage>
</organism>
<name>HSP1_MACMU</name>
<accession>Q9GJU4</accession>
<gene>
    <name type="primary">PRM1</name>
</gene>
<dbReference type="EMBL" id="AF119240">
    <property type="protein sequence ID" value="AAG42164.1"/>
    <property type="molecule type" value="Genomic_DNA"/>
</dbReference>
<dbReference type="RefSeq" id="NP_001137294.1">
    <property type="nucleotide sequence ID" value="NM_001143822.1"/>
</dbReference>
<dbReference type="Ensembl" id="ENSMMUT00000082005.1">
    <property type="protein sequence ID" value="ENSMMUP00000062948.1"/>
    <property type="gene ID" value="ENSMMUG00000049384.1"/>
</dbReference>
<dbReference type="GeneID" id="716327"/>
<dbReference type="KEGG" id="mcc:716327"/>
<dbReference type="CTD" id="5619"/>
<dbReference type="VEuPathDB" id="HostDB:ENSMMUG00000049384"/>
<dbReference type="GeneTree" id="ENSGT00950000183635"/>
<dbReference type="HOGENOM" id="CLU_214580_2_0_1"/>
<dbReference type="InParanoid" id="Q9GJU4"/>
<dbReference type="OMA" id="MARYICC"/>
<dbReference type="Proteomes" id="UP000006718">
    <property type="component" value="Chromosome 20"/>
</dbReference>
<dbReference type="Bgee" id="ENSMMUG00000049384">
    <property type="expression patterns" value="Expressed in testis and 15 other cell types or tissues"/>
</dbReference>
<dbReference type="ExpressionAtlas" id="Q9GJU4">
    <property type="expression patterns" value="baseline"/>
</dbReference>
<dbReference type="GO" id="GO:0000786">
    <property type="term" value="C:nucleosome"/>
    <property type="evidence" value="ECO:0007669"/>
    <property type="project" value="UniProtKB-KW"/>
</dbReference>
<dbReference type="GO" id="GO:0005634">
    <property type="term" value="C:nucleus"/>
    <property type="evidence" value="ECO:0007669"/>
    <property type="project" value="UniProtKB-SubCell"/>
</dbReference>
<dbReference type="GO" id="GO:0003677">
    <property type="term" value="F:DNA binding"/>
    <property type="evidence" value="ECO:0007669"/>
    <property type="project" value="UniProtKB-KW"/>
</dbReference>
<dbReference type="GO" id="GO:0030261">
    <property type="term" value="P:chromosome condensation"/>
    <property type="evidence" value="ECO:0007669"/>
    <property type="project" value="UniProtKB-KW"/>
</dbReference>
<dbReference type="GO" id="GO:0035092">
    <property type="term" value="P:sperm DNA condensation"/>
    <property type="evidence" value="ECO:0007669"/>
    <property type="project" value="InterPro"/>
</dbReference>
<dbReference type="InterPro" id="IPR000221">
    <property type="entry name" value="Protamine_P1"/>
</dbReference>
<dbReference type="Pfam" id="PF00260">
    <property type="entry name" value="Protamine_P1"/>
    <property type="match status" value="1"/>
</dbReference>
<dbReference type="PROSITE" id="PS00048">
    <property type="entry name" value="PROTAMINE_P1"/>
    <property type="match status" value="1"/>
</dbReference>
<protein>
    <recommendedName>
        <fullName>Sperm protamine P1</fullName>
    </recommendedName>
</protein>
<keyword id="KW-0158">Chromosome</keyword>
<keyword id="KW-0217">Developmental protein</keyword>
<keyword id="KW-0221">Differentiation</keyword>
<keyword id="KW-0226">DNA condensation</keyword>
<keyword id="KW-0238">DNA-binding</keyword>
<keyword id="KW-0544">Nucleosome core</keyword>
<keyword id="KW-0539">Nucleus</keyword>
<keyword id="KW-1185">Reference proteome</keyword>
<keyword id="KW-0744">Spermatogenesis</keyword>
<evidence type="ECO:0000250" key="1"/>
<evidence type="ECO:0000305" key="2"/>
<reference key="1">
    <citation type="submission" date="1998-10" db="EMBL/GenBank/DDBJ databases">
        <title>Positive Darwinian selection on the lineage leading to humans.</title>
        <authorList>
            <person name="Karanth P.K."/>
            <person name="Stewart C.-B."/>
            <person name="Holt R.A."/>
            <person name="de Koning J."/>
            <person name="Messier W."/>
        </authorList>
    </citation>
    <scope>NUCLEOTIDE SEQUENCE [GENOMIC DNA]</scope>
</reference>